<evidence type="ECO:0000255" key="1">
    <source>
        <dbReference type="PROSITE-ProRule" id="PRU00145"/>
    </source>
</evidence>
<evidence type="ECO:0000256" key="2">
    <source>
        <dbReference type="SAM" id="MobiDB-lite"/>
    </source>
</evidence>
<evidence type="ECO:0000269" key="3">
    <source>
    </source>
</evidence>
<evidence type="ECO:0000269" key="4">
    <source>
    </source>
</evidence>
<comment type="function">
    <text>Enhances the promotion of guanine-nucleotide exchange by PSCD2 on ARF6 in a concentration-dependent manner.</text>
</comment>
<comment type="subunit">
    <text evidence="3 4">Interacts with guanine-nucleotide exchange factors PSCD1, PSCD2, PSCD3 and PSCD4.</text>
</comment>
<comment type="subcellular location">
    <subcellularLocation>
        <location evidence="3">Cytoplasm</location>
    </subcellularLocation>
    <subcellularLocation>
        <location evidence="3">Cell membrane</location>
    </subcellularLocation>
    <text>Translocated with PSCD2 to the plasma membrane upon epidermal growth factor (EGF) stimulation.</text>
</comment>
<comment type="tissue specificity">
    <text evidence="3">Expressed in brain, spleen, lung, testis and kidney.</text>
</comment>
<accession>Q80VL0</accession>
<gene>
    <name type="primary">Ipcef1</name>
</gene>
<feature type="chain" id="PRO_0000326632" description="Interactor protein for cytohesin exchange factors 1">
    <location>
        <begin position="1"/>
        <end position="406"/>
    </location>
</feature>
<feature type="domain" description="PH" evidence="1">
    <location>
        <begin position="13"/>
        <end position="112"/>
    </location>
</feature>
<feature type="region of interest" description="Disordered" evidence="2">
    <location>
        <begin position="118"/>
        <end position="173"/>
    </location>
</feature>
<feature type="region of interest" description="Disordered" evidence="2">
    <location>
        <begin position="228"/>
        <end position="285"/>
    </location>
</feature>
<feature type="region of interest" description="Necessary for interaction with PSCD2 and to translocate to the plasma membrane">
    <location>
        <begin position="285"/>
        <end position="406"/>
    </location>
</feature>
<feature type="region of interest" description="Disordered" evidence="2">
    <location>
        <begin position="383"/>
        <end position="406"/>
    </location>
</feature>
<feature type="compositionally biased region" description="Acidic residues" evidence="2">
    <location>
        <begin position="123"/>
        <end position="134"/>
    </location>
</feature>
<feature type="compositionally biased region" description="Low complexity" evidence="2">
    <location>
        <begin position="144"/>
        <end position="160"/>
    </location>
</feature>
<feature type="compositionally biased region" description="Polar residues" evidence="2">
    <location>
        <begin position="228"/>
        <end position="239"/>
    </location>
</feature>
<feature type="compositionally biased region" description="Low complexity" evidence="2">
    <location>
        <begin position="243"/>
        <end position="259"/>
    </location>
</feature>
<feature type="compositionally biased region" description="Basic and acidic residues" evidence="2">
    <location>
        <begin position="272"/>
        <end position="285"/>
    </location>
</feature>
<feature type="compositionally biased region" description="Polar residues" evidence="2">
    <location>
        <begin position="392"/>
        <end position="406"/>
    </location>
</feature>
<sequence>MSRRRISCKDLGHADCQGWLYKKKEKGTFLSNKWKKFWVVLKGSSLYWYGNQLAEKADGFVNLPDFTVERASECKKKNAFKINHPQIKTFYFAAENLQEMNMWLNKLGFAVTHKESTTKDEECYSESEQEDPETAVEAPPPPSASATSSPVAARRASSSSPKRRETSCSFSSLENTVKAPSRFSSSGSKERQSWLDIVNSSPATEDVGHPLSFAVQVHTLASSEASSCRVSENSSTTPESGCLNSLSSDDTSSLNNSQDHLTVPDRASGSRMTDRDEIKSSEDDEMEKLYKSLEQASLSPLGDRRPSTKKELRKSFVKRCKNPSINEKLHKIRTLNSTLKCKEHDLAMINQLLDDPKLTARKYREWKVMNTLLIQDIYQQQVPQDPEVTPQEIMNPTSSDCVENSL</sequence>
<dbReference type="EMBL" id="AJ536192">
    <property type="protein sequence ID" value="CAD60208.1"/>
    <property type="molecule type" value="mRNA"/>
</dbReference>
<dbReference type="RefSeq" id="NP_001164270.1">
    <property type="nucleotide sequence ID" value="NM_001170799.1"/>
</dbReference>
<dbReference type="RefSeq" id="NP_001402880.1">
    <property type="nucleotide sequence ID" value="NM_001415951.1"/>
</dbReference>
<dbReference type="SMR" id="Q80VL0"/>
<dbReference type="BioGRID" id="262707">
    <property type="interactions" value="1"/>
</dbReference>
<dbReference type="FunCoup" id="Q80VL0">
    <property type="interactions" value="637"/>
</dbReference>
<dbReference type="STRING" id="10116.ENSRNOP00000024461"/>
<dbReference type="PhosphoSitePlus" id="Q80VL0"/>
<dbReference type="PaxDb" id="10116-ENSRNOP00000024461"/>
<dbReference type="GeneID" id="361474"/>
<dbReference type="UCSC" id="RGD:735159">
    <property type="organism name" value="rat"/>
</dbReference>
<dbReference type="AGR" id="RGD:735159"/>
<dbReference type="RGD" id="735159">
    <property type="gene designation" value="Ipcef1"/>
</dbReference>
<dbReference type="VEuPathDB" id="HostDB:ENSRNOG00000018163"/>
<dbReference type="eggNOG" id="KOG1738">
    <property type="taxonomic scope" value="Eukaryota"/>
</dbReference>
<dbReference type="HOGENOM" id="CLU_051850_0_0_1"/>
<dbReference type="InParanoid" id="Q80VL0"/>
<dbReference type="OrthoDB" id="74412at2759"/>
<dbReference type="PhylomeDB" id="Q80VL0"/>
<dbReference type="PRO" id="PR:Q80VL0"/>
<dbReference type="Proteomes" id="UP000002494">
    <property type="component" value="Chromosome 1"/>
</dbReference>
<dbReference type="Bgee" id="ENSRNOG00000018163">
    <property type="expression patterns" value="Expressed in frontal cortex and 12 other cell types or tissues"/>
</dbReference>
<dbReference type="GO" id="GO:0005737">
    <property type="term" value="C:cytoplasm"/>
    <property type="evidence" value="ECO:0007669"/>
    <property type="project" value="UniProtKB-SubCell"/>
</dbReference>
<dbReference type="GO" id="GO:0005886">
    <property type="term" value="C:plasma membrane"/>
    <property type="evidence" value="ECO:0007669"/>
    <property type="project" value="UniProtKB-SubCell"/>
</dbReference>
<dbReference type="GO" id="GO:0019904">
    <property type="term" value="F:protein domain specific binding"/>
    <property type="evidence" value="ECO:0000353"/>
    <property type="project" value="RGD"/>
</dbReference>
<dbReference type="CDD" id="cd01260">
    <property type="entry name" value="PH_CNK_mammalian-like"/>
    <property type="match status" value="1"/>
</dbReference>
<dbReference type="FunFam" id="2.30.29.30:FF:000092">
    <property type="entry name" value="Connector enhancer of kinase suppressor of Ras 2"/>
    <property type="match status" value="1"/>
</dbReference>
<dbReference type="Gene3D" id="2.30.29.30">
    <property type="entry name" value="Pleckstrin-homology domain (PH domain)/Phosphotyrosine-binding domain (PTB)"/>
    <property type="match status" value="1"/>
</dbReference>
<dbReference type="InterPro" id="IPR051566">
    <property type="entry name" value="CNKSR"/>
</dbReference>
<dbReference type="InterPro" id="IPR011993">
    <property type="entry name" value="PH-like_dom_sf"/>
</dbReference>
<dbReference type="InterPro" id="IPR001849">
    <property type="entry name" value="PH_domain"/>
</dbReference>
<dbReference type="PANTHER" id="PTHR12844:SF45">
    <property type="entry name" value="CNK3_IPCEF1 FUSION PROTEIN-RELATED"/>
    <property type="match status" value="1"/>
</dbReference>
<dbReference type="PANTHER" id="PTHR12844">
    <property type="entry name" value="CONNECTOR ENCHANCER OF KINASE SUPPRESSOR OF RAS"/>
    <property type="match status" value="1"/>
</dbReference>
<dbReference type="Pfam" id="PF00169">
    <property type="entry name" value="PH"/>
    <property type="match status" value="1"/>
</dbReference>
<dbReference type="SMART" id="SM00233">
    <property type="entry name" value="PH"/>
    <property type="match status" value="1"/>
</dbReference>
<dbReference type="SUPFAM" id="SSF50729">
    <property type="entry name" value="PH domain-like"/>
    <property type="match status" value="1"/>
</dbReference>
<dbReference type="PROSITE" id="PS50003">
    <property type="entry name" value="PH_DOMAIN"/>
    <property type="match status" value="1"/>
</dbReference>
<organism>
    <name type="scientific">Rattus norvegicus</name>
    <name type="common">Rat</name>
    <dbReference type="NCBI Taxonomy" id="10116"/>
    <lineage>
        <taxon>Eukaryota</taxon>
        <taxon>Metazoa</taxon>
        <taxon>Chordata</taxon>
        <taxon>Craniata</taxon>
        <taxon>Vertebrata</taxon>
        <taxon>Euteleostomi</taxon>
        <taxon>Mammalia</taxon>
        <taxon>Eutheria</taxon>
        <taxon>Euarchontoglires</taxon>
        <taxon>Glires</taxon>
        <taxon>Rodentia</taxon>
        <taxon>Myomorpha</taxon>
        <taxon>Muroidea</taxon>
        <taxon>Muridae</taxon>
        <taxon>Murinae</taxon>
        <taxon>Rattus</taxon>
    </lineage>
</organism>
<reference key="1">
    <citation type="journal article" date="2003" name="J. Biol. Chem.">
        <title>Interaction protein for cytohesin exchange factors 1 (IPCEF1) binds cytohesin 2 and modifies its activity.</title>
        <authorList>
            <person name="Venkateswarlu K."/>
        </authorList>
    </citation>
    <scope>NUCLEOTIDE SEQUENCE [MRNA]</scope>
    <scope>INTERACTION WITH PSCD1; PSCD2; PSCD3 AND PSCD4</scope>
    <scope>SUBCELLULAR LOCATION</scope>
    <scope>TISSUE SPECIFICITY</scope>
    <source>
        <strain>Sprague-Dawley</strain>
        <tissue>Brain</tissue>
    </source>
</reference>
<reference key="2">
    <citation type="journal article" date="2005" name="Methods Enzymol.">
        <title>Analysis of the interaction between cytohesin 2 and IPCEF1.</title>
        <authorList>
            <person name="Venkateswarlu K."/>
        </authorList>
    </citation>
    <scope>INTERACTION WITH PSCD2</scope>
</reference>
<proteinExistence type="evidence at protein level"/>
<protein>
    <recommendedName>
        <fullName>Interactor protein for cytohesin exchange factors 1</fullName>
    </recommendedName>
</protein>
<keyword id="KW-1003">Cell membrane</keyword>
<keyword id="KW-0963">Cytoplasm</keyword>
<keyword id="KW-0472">Membrane</keyword>
<keyword id="KW-1185">Reference proteome</keyword>
<name>ICEF1_RAT</name>